<accession>P25550</accession>
<accession>Q2M8A5</accession>
<keyword id="KW-0004">4Fe-4S</keyword>
<keyword id="KW-0408">Iron</keyword>
<keyword id="KW-0411">Iron-sulfur</keyword>
<keyword id="KW-0479">Metal-binding</keyword>
<keyword id="KW-1185">Reference proteome</keyword>
<keyword id="KW-0949">S-adenosyl-L-methionine</keyword>
<organism>
    <name type="scientific">Escherichia coli (strain K12)</name>
    <dbReference type="NCBI Taxonomy" id="83333"/>
    <lineage>
        <taxon>Bacteria</taxon>
        <taxon>Pseudomonadati</taxon>
        <taxon>Pseudomonadota</taxon>
        <taxon>Gammaproteobacteria</taxon>
        <taxon>Enterobacterales</taxon>
        <taxon>Enterobacteriaceae</taxon>
        <taxon>Escherichia</taxon>
    </lineage>
</organism>
<protein>
    <recommendedName>
        <fullName>Anaerobic sulfatase-maturating enzyme homolog AslB</fullName>
        <shortName>AnSME homolog</shortName>
    </recommendedName>
</protein>
<reference key="1">
    <citation type="submission" date="1992-04" db="EMBL/GenBank/DDBJ databases">
        <authorList>
            <person name="Murphy H.R."/>
            <person name="Kalman M."/>
            <person name="Cashel M."/>
        </authorList>
    </citation>
    <scope>NUCLEOTIDE SEQUENCE [GENOMIC DNA]</scope>
    <source>
        <strain>K12</strain>
    </source>
</reference>
<reference key="2">
    <citation type="journal article" date="1992" name="Science">
        <title>Analysis of the Escherichia coli genome: DNA sequence of the region from 84.5 to 86.5 minutes.</title>
        <authorList>
            <person name="Daniels D.L."/>
            <person name="Plunkett G. III"/>
            <person name="Burland V.D."/>
            <person name="Blattner F.R."/>
        </authorList>
    </citation>
    <scope>NUCLEOTIDE SEQUENCE [LARGE SCALE GENOMIC DNA]</scope>
    <source>
        <strain>K12 / MG1655 / ATCC 47076</strain>
    </source>
</reference>
<reference key="3">
    <citation type="journal article" date="1997" name="Science">
        <title>The complete genome sequence of Escherichia coli K-12.</title>
        <authorList>
            <person name="Blattner F.R."/>
            <person name="Plunkett G. III"/>
            <person name="Bloch C.A."/>
            <person name="Perna N.T."/>
            <person name="Burland V."/>
            <person name="Riley M."/>
            <person name="Collado-Vides J."/>
            <person name="Glasner J.D."/>
            <person name="Rode C.K."/>
            <person name="Mayhew G.F."/>
            <person name="Gregor J."/>
            <person name="Davis N.W."/>
            <person name="Kirkpatrick H.A."/>
            <person name="Goeden M.A."/>
            <person name="Rose D.J."/>
            <person name="Mau B."/>
            <person name="Shao Y."/>
        </authorList>
    </citation>
    <scope>NUCLEOTIDE SEQUENCE [LARGE SCALE GENOMIC DNA]</scope>
    <scope>SEQUENCE REVISION TO 391</scope>
    <source>
        <strain>K12 / MG1655 / ATCC 47076</strain>
    </source>
</reference>
<reference key="4">
    <citation type="journal article" date="2006" name="Nucleic Acids Res.">
        <title>Escherichia coli K-12: a cooperatively developed annotation snapshot -- 2005.</title>
        <authorList>
            <person name="Riley M."/>
            <person name="Abe T."/>
            <person name="Arnaud M.B."/>
            <person name="Berlyn M.K.B."/>
            <person name="Blattner F.R."/>
            <person name="Chaudhuri R.R."/>
            <person name="Glasner J.D."/>
            <person name="Horiuchi T."/>
            <person name="Keseler I.M."/>
            <person name="Kosuge T."/>
            <person name="Mori H."/>
            <person name="Perna N.T."/>
            <person name="Plunkett G. III"/>
            <person name="Rudd K.E."/>
            <person name="Serres M.H."/>
            <person name="Thomas G.H."/>
            <person name="Thomson N.R."/>
            <person name="Wishart D."/>
            <person name="Wanner B.L."/>
        </authorList>
    </citation>
    <scope>SEQUENCE REVISION TO 116 AND 117</scope>
</reference>
<reference key="5">
    <citation type="journal article" date="2006" name="Mol. Syst. Biol.">
        <title>Highly accurate genome sequences of Escherichia coli K-12 strains MG1655 and W3110.</title>
        <authorList>
            <person name="Hayashi K."/>
            <person name="Morooka N."/>
            <person name="Yamamoto Y."/>
            <person name="Fujita K."/>
            <person name="Isono K."/>
            <person name="Choi S."/>
            <person name="Ohtsubo E."/>
            <person name="Baba T."/>
            <person name="Wanner B.L."/>
            <person name="Mori H."/>
            <person name="Horiuchi T."/>
        </authorList>
    </citation>
    <scope>NUCLEOTIDE SEQUENCE [LARGE SCALE GENOMIC DNA]</scope>
    <source>
        <strain>K12 / W3110 / ATCC 27325 / DSM 5911</strain>
    </source>
</reference>
<reference key="6">
    <citation type="journal article" date="2001" name="Nucleic Acids Res.">
        <title>Radical SAM, a novel protein superfamily linking unresolved steps in familiar biosynthetic pathways with radical mechanisms: functional characterization using new analysis and information visualization methods.</title>
        <authorList>
            <person name="Sofia H.J."/>
            <person name="Chen G."/>
            <person name="Hetzler B.G."/>
            <person name="Reyes-Spindola J.F."/>
            <person name="Miller N.E."/>
        </authorList>
    </citation>
    <scope>MEMBER OF THE RADICAL SAM SUPERFAMILY</scope>
</reference>
<reference key="7">
    <citation type="journal article" date="2007" name="FEBS Lett.">
        <title>First evidences for a third sulfatase maturation system in prokaryotes from E. coli aslB and ydeM deletion mutants.</title>
        <authorList>
            <person name="Benjdia A."/>
            <person name="Deho G."/>
            <person name="Rabot S."/>
            <person name="Berteau O."/>
        </authorList>
    </citation>
    <scope>NON-INVOLVEMENT IN SULFATASE MATURATION</scope>
    <source>
        <strain>K12 / BW25113</strain>
    </source>
</reference>
<name>ASLB_ECOLI</name>
<gene>
    <name type="primary">aslB</name>
    <name type="synonym">atsB</name>
    <name type="ordered locus">b3800</name>
    <name type="ordered locus">JW5594</name>
</gene>
<evidence type="ECO:0000250" key="1">
    <source>
        <dbReference type="UniProtKB" id="Q0TTH1"/>
    </source>
</evidence>
<evidence type="ECO:0000255" key="2">
    <source>
        <dbReference type="PROSITE-ProRule" id="PRU01266"/>
    </source>
</evidence>
<evidence type="ECO:0000305" key="3"/>
<feature type="chain" id="PRO_0000134459" description="Anaerobic sulfatase-maturating enzyme homolog AslB">
    <location>
        <begin position="1"/>
        <end position="411"/>
    </location>
</feature>
<feature type="domain" description="Radical SAM core" evidence="2">
    <location>
        <begin position="3"/>
        <end position="250"/>
    </location>
</feature>
<feature type="active site" description="Proton acceptor" evidence="1">
    <location>
        <position position="298"/>
    </location>
</feature>
<feature type="binding site" evidence="1">
    <location>
        <position position="21"/>
    </location>
    <ligand>
        <name>[4Fe-4S] cluster</name>
        <dbReference type="ChEBI" id="CHEBI:49883"/>
        <label>1</label>
        <note>4Fe-4S-S-AdoMet</note>
    </ligand>
</feature>
<feature type="binding site" evidence="1">
    <location>
        <position position="25"/>
    </location>
    <ligand>
        <name>[4Fe-4S] cluster</name>
        <dbReference type="ChEBI" id="CHEBI:49883"/>
        <label>1</label>
        <note>4Fe-4S-S-AdoMet</note>
    </ligand>
</feature>
<feature type="binding site" evidence="1">
    <location>
        <position position="27"/>
    </location>
    <ligand>
        <name>S-adenosyl-L-methionine</name>
        <dbReference type="ChEBI" id="CHEBI:59789"/>
    </ligand>
</feature>
<feature type="binding site" evidence="1">
    <location>
        <position position="28"/>
    </location>
    <ligand>
        <name>[4Fe-4S] cluster</name>
        <dbReference type="ChEBI" id="CHEBI:49883"/>
        <label>1</label>
        <note>4Fe-4S-S-AdoMet</note>
    </ligand>
</feature>
<feature type="binding site" evidence="1">
    <location>
        <position position="74"/>
    </location>
    <ligand>
        <name>S-adenosyl-L-methionine</name>
        <dbReference type="ChEBI" id="CHEBI:59789"/>
    </ligand>
</feature>
<feature type="binding site" evidence="1">
    <location>
        <position position="129"/>
    </location>
    <ligand>
        <name>S-adenosyl-L-methionine</name>
        <dbReference type="ChEBI" id="CHEBI:59789"/>
    </ligand>
</feature>
<feature type="binding site" evidence="1">
    <location>
        <position position="141"/>
    </location>
    <ligand>
        <name>S-adenosyl-L-methionine</name>
        <dbReference type="ChEBI" id="CHEBI:59789"/>
    </ligand>
</feature>
<feature type="binding site" evidence="1">
    <location>
        <position position="276"/>
    </location>
    <ligand>
        <name>[4Fe-4S] cluster</name>
        <dbReference type="ChEBI" id="CHEBI:49883"/>
        <label>2</label>
    </ligand>
</feature>
<feature type="binding site" evidence="1">
    <location>
        <position position="282"/>
    </location>
    <ligand>
        <name>[4Fe-4S] cluster</name>
        <dbReference type="ChEBI" id="CHEBI:49883"/>
        <label>2</label>
    </ligand>
</feature>
<feature type="binding site" evidence="1">
    <location>
        <position position="297"/>
    </location>
    <ligand>
        <name>[4Fe-4S] cluster</name>
        <dbReference type="ChEBI" id="CHEBI:49883"/>
        <label>2</label>
    </ligand>
</feature>
<feature type="binding site" evidence="1">
    <location>
        <position position="339"/>
    </location>
    <ligand>
        <name>[4Fe-4S] cluster</name>
        <dbReference type="ChEBI" id="CHEBI:49883"/>
        <label>3</label>
    </ligand>
</feature>
<feature type="binding site" evidence="1">
    <location>
        <position position="342"/>
    </location>
    <ligand>
        <name>[4Fe-4S] cluster</name>
        <dbReference type="ChEBI" id="CHEBI:49883"/>
        <label>3</label>
    </ligand>
</feature>
<feature type="binding site" evidence="1">
    <location>
        <position position="348"/>
    </location>
    <ligand>
        <name>[4Fe-4S] cluster</name>
        <dbReference type="ChEBI" id="CHEBI:49883"/>
        <label>3</label>
    </ligand>
</feature>
<feature type="binding site" evidence="1">
    <location>
        <position position="352"/>
    </location>
    <ligand>
        <name>[4Fe-4S] cluster</name>
        <dbReference type="ChEBI" id="CHEBI:49883"/>
        <label>2</label>
    </ligand>
</feature>
<feature type="binding site" evidence="1">
    <location>
        <position position="371"/>
    </location>
    <ligand>
        <name>[4Fe-4S] cluster</name>
        <dbReference type="ChEBI" id="CHEBI:49883"/>
        <label>3</label>
    </ligand>
</feature>
<feature type="sequence conflict" description="In Ref. 2; AAA67596." evidence="3" ref="2">
    <original>CA</original>
    <variation>WP</variation>
    <location>
        <begin position="116"/>
        <end position="117"/>
    </location>
</feature>
<feature type="sequence conflict" description="In Ref. 2; AAA67596." evidence="3" ref="2">
    <original>L</original>
    <variation>C</variation>
    <location>
        <position position="391"/>
    </location>
</feature>
<proteinExistence type="inferred from homology"/>
<dbReference type="EMBL" id="M90498">
    <property type="protein sequence ID" value="AAC32035.1"/>
    <property type="molecule type" value="Genomic_DNA"/>
</dbReference>
<dbReference type="EMBL" id="M87049">
    <property type="protein sequence ID" value="AAA67596.1"/>
    <property type="molecule type" value="Genomic_DNA"/>
</dbReference>
<dbReference type="EMBL" id="U00096">
    <property type="protein sequence ID" value="AAT48217.1"/>
    <property type="molecule type" value="Genomic_DNA"/>
</dbReference>
<dbReference type="EMBL" id="AP009048">
    <property type="protein sequence ID" value="BAE77501.1"/>
    <property type="molecule type" value="Genomic_DNA"/>
</dbReference>
<dbReference type="PIR" id="A65184">
    <property type="entry name" value="A65184"/>
</dbReference>
<dbReference type="RefSeq" id="WP_000941517.1">
    <property type="nucleotide sequence ID" value="NZ_SSZK01000025.1"/>
</dbReference>
<dbReference type="RefSeq" id="YP_026259.1">
    <property type="nucleotide sequence ID" value="NC_000913.3"/>
</dbReference>
<dbReference type="SMR" id="P25550"/>
<dbReference type="BioGRID" id="4259322">
    <property type="interactions" value="14"/>
</dbReference>
<dbReference type="FunCoup" id="P25550">
    <property type="interactions" value="41"/>
</dbReference>
<dbReference type="STRING" id="511145.b3800"/>
<dbReference type="PaxDb" id="511145-b3800"/>
<dbReference type="DNASU" id="949013"/>
<dbReference type="EnsemblBacteria" id="AAT48217">
    <property type="protein sequence ID" value="AAT48217"/>
    <property type="gene ID" value="b3800"/>
</dbReference>
<dbReference type="GeneID" id="949013"/>
<dbReference type="KEGG" id="ecj:JW5594"/>
<dbReference type="KEGG" id="eco:b3800"/>
<dbReference type="KEGG" id="ecoc:C3026_20575"/>
<dbReference type="PATRIC" id="fig|511145.12.peg.3914"/>
<dbReference type="EchoBASE" id="EB0088"/>
<dbReference type="eggNOG" id="COG0641">
    <property type="taxonomic scope" value="Bacteria"/>
</dbReference>
<dbReference type="HOGENOM" id="CLU_009273_10_0_6"/>
<dbReference type="InParanoid" id="P25550"/>
<dbReference type="OMA" id="KLCWGEC"/>
<dbReference type="OrthoDB" id="9782387at2"/>
<dbReference type="PhylomeDB" id="P25550"/>
<dbReference type="BioCyc" id="EcoCyc:EG10090-MONOMER"/>
<dbReference type="PRO" id="PR:P25550"/>
<dbReference type="Proteomes" id="UP000000625">
    <property type="component" value="Chromosome"/>
</dbReference>
<dbReference type="GO" id="GO:0051539">
    <property type="term" value="F:4 iron, 4 sulfur cluster binding"/>
    <property type="evidence" value="ECO:0007669"/>
    <property type="project" value="UniProtKB-KW"/>
</dbReference>
<dbReference type="GO" id="GO:0046872">
    <property type="term" value="F:metal ion binding"/>
    <property type="evidence" value="ECO:0007669"/>
    <property type="project" value="UniProtKB-KW"/>
</dbReference>
<dbReference type="GO" id="GO:0016491">
    <property type="term" value="F:oxidoreductase activity"/>
    <property type="evidence" value="ECO:0007669"/>
    <property type="project" value="InterPro"/>
</dbReference>
<dbReference type="GO" id="GO:0051604">
    <property type="term" value="P:protein maturation"/>
    <property type="evidence" value="ECO:0000250"/>
    <property type="project" value="EcoCyc"/>
</dbReference>
<dbReference type="CDD" id="cd01335">
    <property type="entry name" value="Radical_SAM"/>
    <property type="match status" value="1"/>
</dbReference>
<dbReference type="CDD" id="cd21120">
    <property type="entry name" value="SPASM_anSME"/>
    <property type="match status" value="1"/>
</dbReference>
<dbReference type="FunFam" id="3.20.20.70:FF:000207">
    <property type="entry name" value="Anaerobic sulfatase maturase AslB"/>
    <property type="match status" value="1"/>
</dbReference>
<dbReference type="Gene3D" id="3.20.20.70">
    <property type="entry name" value="Aldolase class I"/>
    <property type="match status" value="1"/>
</dbReference>
<dbReference type="InterPro" id="IPR023885">
    <property type="entry name" value="4Fe4S-binding_SPASM_dom"/>
</dbReference>
<dbReference type="InterPro" id="IPR013785">
    <property type="entry name" value="Aldolase_TIM"/>
</dbReference>
<dbReference type="InterPro" id="IPR034491">
    <property type="entry name" value="Anaerob_Ser_sulfatase-maturase"/>
</dbReference>
<dbReference type="InterPro" id="IPR007197">
    <property type="entry name" value="rSAM"/>
</dbReference>
<dbReference type="InterPro" id="IPR047207">
    <property type="entry name" value="SPASM_anSME"/>
</dbReference>
<dbReference type="InterPro" id="IPR023867">
    <property type="entry name" value="Sulphatase_maturase_rSAM"/>
</dbReference>
<dbReference type="NCBIfam" id="TIGR04085">
    <property type="entry name" value="rSAM_more_4Fe4S"/>
    <property type="match status" value="1"/>
</dbReference>
<dbReference type="NCBIfam" id="TIGR03942">
    <property type="entry name" value="sulfatase_rSAM"/>
    <property type="match status" value="1"/>
</dbReference>
<dbReference type="PANTHER" id="PTHR43273">
    <property type="entry name" value="ANAEROBIC SULFATASE-MATURATING ENZYME HOMOLOG ASLB-RELATED"/>
    <property type="match status" value="1"/>
</dbReference>
<dbReference type="PANTHER" id="PTHR43273:SF3">
    <property type="entry name" value="ANAEROBIC SULFATASE-MATURATING ENZYME HOMOLOG ASLB-RELATED"/>
    <property type="match status" value="1"/>
</dbReference>
<dbReference type="Pfam" id="PF04055">
    <property type="entry name" value="Radical_SAM"/>
    <property type="match status" value="1"/>
</dbReference>
<dbReference type="Pfam" id="PF13186">
    <property type="entry name" value="SPASM"/>
    <property type="match status" value="1"/>
</dbReference>
<dbReference type="SFLD" id="SFLDF00285">
    <property type="entry name" value="anaerobic_Ser-type_sulfatase-m"/>
    <property type="match status" value="1"/>
</dbReference>
<dbReference type="SFLD" id="SFLDS00029">
    <property type="entry name" value="Radical_SAM"/>
    <property type="match status" value="1"/>
</dbReference>
<dbReference type="SFLD" id="SFLDG01384">
    <property type="entry name" value="thioether_bond_formation_requi"/>
    <property type="match status" value="1"/>
</dbReference>
<dbReference type="SUPFAM" id="SSF102114">
    <property type="entry name" value="Radical SAM enzymes"/>
    <property type="match status" value="1"/>
</dbReference>
<dbReference type="PROSITE" id="PS51918">
    <property type="entry name" value="RADICAL_SAM"/>
    <property type="match status" value="1"/>
</dbReference>
<comment type="cofactor">
    <cofactor evidence="1">
        <name>[4Fe-4S] cluster</name>
        <dbReference type="ChEBI" id="CHEBI:49883"/>
    </cofactor>
    <text evidence="1">Binds 3 [4Fe-4S] clusters (By similarity). The first cluster is coordinated with 3 cysteines and an exchangeable S-adenosyl-L-methionine (By similarity).</text>
</comment>
<comment type="similarity">
    <text evidence="3">Belongs to the radical SAM superfamily. Anaerobic sulfatase-maturating enzyme family.</text>
</comment>
<comment type="caution">
    <text evidence="3">Despite its homology to the anaerobic sulfatase-maturating enzymes, it is not involved in Cys-type sulfatase maturation in vivo.</text>
</comment>
<sequence>MLQQVPTRAFHVMAKPSGSDCNLNCDYCFYLEKQSLYREKPVTHMDDDTLEAYVRHYIAASEPQNEVAFTWQGGEPTLLGLAFYRRAVALQAKYGAGRKISNSFQTNGVLLDDEWCAFLAEHHFLVGLSLDGPPEIHNQYRVTKGGRPTHKLVMRALTLLQKHHVDYNVLVCVNRTSAQQPLQVYDFLCDAGVEFIQFIPVVERLADETTARDGLKLHAPGDIQGELTEWSVRPEEFGEFLVAIFDHWIKRDVGKIFVMNIEWAFANFVGAPGAVCHHQPTCGRSVIVEHNGDVYACDHYVYPQYRLGNMHQQTIAEMIDSPQQQAFGEDKFKQLPAQCRSCNVLKACWGGCPKHRFMLDASGKPGLNYLCAGYQRYFRHLPPYLKAMADLLAHGRPASDIMHAHLLVVSK</sequence>